<reference key="1">
    <citation type="journal article" date="2001" name="Proc. Natl. Acad. Sci. U.S.A.">
        <title>Complete genomic sequence of Pasteurella multocida Pm70.</title>
        <authorList>
            <person name="May B.J."/>
            <person name="Zhang Q."/>
            <person name="Li L.L."/>
            <person name="Paustian M.L."/>
            <person name="Whittam T.S."/>
            <person name="Kapur V."/>
        </authorList>
    </citation>
    <scope>NUCLEOTIDE SEQUENCE [LARGE SCALE GENOMIC DNA]</scope>
    <source>
        <strain>Pm70</strain>
    </source>
</reference>
<comment type="similarity">
    <text evidence="2">Belongs to the DeoC/FbaB aldolase family.</text>
</comment>
<organism>
    <name type="scientific">Pasteurella multocida (strain Pm70)</name>
    <dbReference type="NCBI Taxonomy" id="272843"/>
    <lineage>
        <taxon>Bacteria</taxon>
        <taxon>Pseudomonadati</taxon>
        <taxon>Pseudomonadota</taxon>
        <taxon>Gammaproteobacteria</taxon>
        <taxon>Pasteurellales</taxon>
        <taxon>Pasteurellaceae</taxon>
        <taxon>Pasteurella</taxon>
    </lineage>
</organism>
<sequence>MADLDDIKDGKDFGLDRPQQHKAFYLKGSGALDWGMQSRLADIFNPKTGKTIMLAFDHGYFQGPTTGLERIDLHIAPLFEYTDVLMCTRGILRSVVPPETRKPVVLRASGANSILTELSNEAVAVSVEDALRLNVSAMAAQVYIGSEHEHQSIKNIIQLVDQGTRYGMPTMAVTGVGKDMARDQRYFSLATRIAAEMGAHIIKTYYVDKGFERITAGCPVPIVIAGGKKLPEREALEMCYQAIDQGALGVDMGRNIFQSEAPIAMLKAVHAVVHGGETAEKAYQLYLDEK</sequence>
<feature type="chain" id="PRO_0000138946" description="Uncharacterized aldolase PM1278">
    <location>
        <begin position="1"/>
        <end position="290"/>
    </location>
</feature>
<feature type="active site" description="Schiff-base intermediate with substrate" evidence="1">
    <location>
        <position position="203"/>
    </location>
</feature>
<proteinExistence type="inferred from homology"/>
<keyword id="KW-0456">Lyase</keyword>
<keyword id="KW-1185">Reference proteome</keyword>
<keyword id="KW-0704">Schiff base</keyword>
<evidence type="ECO:0000250" key="1"/>
<evidence type="ECO:0000305" key="2"/>
<accession>Q9CLF7</accession>
<dbReference type="EC" id="4.2.1.-"/>
<dbReference type="EMBL" id="AE004439">
    <property type="protein sequence ID" value="AAK03362.1"/>
    <property type="molecule type" value="Genomic_DNA"/>
</dbReference>
<dbReference type="SMR" id="Q9CLF7"/>
<dbReference type="STRING" id="272843.PM1278"/>
<dbReference type="EnsemblBacteria" id="AAK03362">
    <property type="protein sequence ID" value="AAK03362"/>
    <property type="gene ID" value="PM1278"/>
</dbReference>
<dbReference type="KEGG" id="pmu:PM1278"/>
<dbReference type="HOGENOM" id="CLU_057069_1_0_6"/>
<dbReference type="OrthoDB" id="5915071at2"/>
<dbReference type="Proteomes" id="UP000000809">
    <property type="component" value="Chromosome"/>
</dbReference>
<dbReference type="GO" id="GO:0004332">
    <property type="term" value="F:fructose-bisphosphate aldolase activity"/>
    <property type="evidence" value="ECO:0007669"/>
    <property type="project" value="InterPro"/>
</dbReference>
<dbReference type="CDD" id="cd00958">
    <property type="entry name" value="DhnA"/>
    <property type="match status" value="1"/>
</dbReference>
<dbReference type="Gene3D" id="3.20.20.70">
    <property type="entry name" value="Aldolase class I"/>
    <property type="match status" value="1"/>
</dbReference>
<dbReference type="InterPro" id="IPR013785">
    <property type="entry name" value="Aldolase_TIM"/>
</dbReference>
<dbReference type="InterPro" id="IPR002915">
    <property type="entry name" value="DeoC/FbaB/LacD_aldolase"/>
</dbReference>
<dbReference type="InterPro" id="IPR050456">
    <property type="entry name" value="DeoC/FbaB_aldolase"/>
</dbReference>
<dbReference type="InterPro" id="IPR041720">
    <property type="entry name" value="FbaB-like"/>
</dbReference>
<dbReference type="NCBIfam" id="NF006081">
    <property type="entry name" value="PRK08227.1"/>
    <property type="match status" value="1"/>
</dbReference>
<dbReference type="PANTHER" id="PTHR47916:SF1">
    <property type="entry name" value="3-HYDROXY-5-PHOSPHONOOXYPENTANE-2,4-DIONE THIOLASE"/>
    <property type="match status" value="1"/>
</dbReference>
<dbReference type="PANTHER" id="PTHR47916">
    <property type="entry name" value="FRUCTOSE-BISPHOSPHATE ALDOLASE CLASS 1"/>
    <property type="match status" value="1"/>
</dbReference>
<dbReference type="Pfam" id="PF01791">
    <property type="entry name" value="DeoC"/>
    <property type="match status" value="1"/>
</dbReference>
<dbReference type="PIRSF" id="PIRSF038992">
    <property type="entry name" value="Aldolase_Ia"/>
    <property type="match status" value="1"/>
</dbReference>
<dbReference type="SMART" id="SM01133">
    <property type="entry name" value="DeoC"/>
    <property type="match status" value="1"/>
</dbReference>
<dbReference type="SUPFAM" id="SSF51569">
    <property type="entry name" value="Aldolase"/>
    <property type="match status" value="1"/>
</dbReference>
<name>Y1278_PASMU</name>
<protein>
    <recommendedName>
        <fullName>Uncharacterized aldolase PM1278</fullName>
        <ecNumber>4.2.1.-</ecNumber>
    </recommendedName>
</protein>
<gene>
    <name type="ordered locus">PM1278</name>
</gene>